<accession>B9JH26</accession>
<sequence>METISTIAALRERLAAYRRAGKSIGLVPTMGYLHAGHMELVSRARAENDIVVVSIFVNPLQFGANEDLAKYPRDLERDSAILRDGKVDFIFAPGVADMYPRPMETVVDVPKLGTELEGAVRPGHFAGVATVVTKLFNIVQPDSAYFGEKDYQQVAIIRRMVEDLAQPVRVVPVPTVRDADGLALSSRNVYLSTEQRAAAVIVPKALAEAERLYNEGADDPIAFEAALRDFIASEPFATPEVTAVRHPDTLEPLTNLQGQPILVALFVRIGATRLLDNRVVGRKQASSDKAA</sequence>
<keyword id="KW-0067">ATP-binding</keyword>
<keyword id="KW-0963">Cytoplasm</keyword>
<keyword id="KW-0436">Ligase</keyword>
<keyword id="KW-0547">Nucleotide-binding</keyword>
<keyword id="KW-0566">Pantothenate biosynthesis</keyword>
<name>PANC_RHIR8</name>
<organism>
    <name type="scientific">Rhizobium rhizogenes (strain K84 / ATCC BAA-868)</name>
    <name type="common">Agrobacterium radiobacter</name>
    <dbReference type="NCBI Taxonomy" id="311403"/>
    <lineage>
        <taxon>Bacteria</taxon>
        <taxon>Pseudomonadati</taxon>
        <taxon>Pseudomonadota</taxon>
        <taxon>Alphaproteobacteria</taxon>
        <taxon>Hyphomicrobiales</taxon>
        <taxon>Rhizobiaceae</taxon>
        <taxon>Rhizobium/Agrobacterium group</taxon>
        <taxon>Rhizobium</taxon>
    </lineage>
</organism>
<gene>
    <name evidence="1" type="primary">panC</name>
    <name type="ordered locus">Arad_2962</name>
</gene>
<proteinExistence type="inferred from homology"/>
<dbReference type="EC" id="6.3.2.1" evidence="1"/>
<dbReference type="EMBL" id="CP000628">
    <property type="protein sequence ID" value="ACM27023.1"/>
    <property type="molecule type" value="Genomic_DNA"/>
</dbReference>
<dbReference type="RefSeq" id="WP_012651802.1">
    <property type="nucleotide sequence ID" value="NC_011985.1"/>
</dbReference>
<dbReference type="SMR" id="B9JH26"/>
<dbReference type="STRING" id="311403.Arad_2962"/>
<dbReference type="GeneID" id="86848893"/>
<dbReference type="KEGG" id="ara:Arad_2962"/>
<dbReference type="eggNOG" id="COG0414">
    <property type="taxonomic scope" value="Bacteria"/>
</dbReference>
<dbReference type="HOGENOM" id="CLU_047148_0_0_5"/>
<dbReference type="UniPathway" id="UPA00028">
    <property type="reaction ID" value="UER00005"/>
</dbReference>
<dbReference type="Proteomes" id="UP000001600">
    <property type="component" value="Chromosome 1"/>
</dbReference>
<dbReference type="GO" id="GO:0005829">
    <property type="term" value="C:cytosol"/>
    <property type="evidence" value="ECO:0007669"/>
    <property type="project" value="TreeGrafter"/>
</dbReference>
<dbReference type="GO" id="GO:0005524">
    <property type="term" value="F:ATP binding"/>
    <property type="evidence" value="ECO:0007669"/>
    <property type="project" value="UniProtKB-KW"/>
</dbReference>
<dbReference type="GO" id="GO:0004592">
    <property type="term" value="F:pantoate-beta-alanine ligase activity"/>
    <property type="evidence" value="ECO:0007669"/>
    <property type="project" value="UniProtKB-UniRule"/>
</dbReference>
<dbReference type="GO" id="GO:0015940">
    <property type="term" value="P:pantothenate biosynthetic process"/>
    <property type="evidence" value="ECO:0007669"/>
    <property type="project" value="UniProtKB-UniRule"/>
</dbReference>
<dbReference type="CDD" id="cd00560">
    <property type="entry name" value="PanC"/>
    <property type="match status" value="1"/>
</dbReference>
<dbReference type="FunFam" id="3.40.50.620:FF:000013">
    <property type="entry name" value="Pantothenate synthetase"/>
    <property type="match status" value="1"/>
</dbReference>
<dbReference type="Gene3D" id="3.40.50.620">
    <property type="entry name" value="HUPs"/>
    <property type="match status" value="1"/>
</dbReference>
<dbReference type="Gene3D" id="3.30.1300.10">
    <property type="entry name" value="Pantoate-beta-alanine ligase, C-terminal domain"/>
    <property type="match status" value="1"/>
</dbReference>
<dbReference type="HAMAP" id="MF_00158">
    <property type="entry name" value="PanC"/>
    <property type="match status" value="1"/>
</dbReference>
<dbReference type="InterPro" id="IPR004821">
    <property type="entry name" value="Cyt_trans-like"/>
</dbReference>
<dbReference type="InterPro" id="IPR003721">
    <property type="entry name" value="Pantoate_ligase"/>
</dbReference>
<dbReference type="InterPro" id="IPR042176">
    <property type="entry name" value="Pantoate_ligase_C"/>
</dbReference>
<dbReference type="InterPro" id="IPR014729">
    <property type="entry name" value="Rossmann-like_a/b/a_fold"/>
</dbReference>
<dbReference type="NCBIfam" id="TIGR00125">
    <property type="entry name" value="cyt_tran_rel"/>
    <property type="match status" value="1"/>
</dbReference>
<dbReference type="NCBIfam" id="TIGR00018">
    <property type="entry name" value="panC"/>
    <property type="match status" value="1"/>
</dbReference>
<dbReference type="PANTHER" id="PTHR21299">
    <property type="entry name" value="CYTIDYLATE KINASE/PANTOATE-BETA-ALANINE LIGASE"/>
    <property type="match status" value="1"/>
</dbReference>
<dbReference type="PANTHER" id="PTHR21299:SF1">
    <property type="entry name" value="PANTOATE--BETA-ALANINE LIGASE"/>
    <property type="match status" value="1"/>
</dbReference>
<dbReference type="Pfam" id="PF02569">
    <property type="entry name" value="Pantoate_ligase"/>
    <property type="match status" value="1"/>
</dbReference>
<dbReference type="SUPFAM" id="SSF52374">
    <property type="entry name" value="Nucleotidylyl transferase"/>
    <property type="match status" value="1"/>
</dbReference>
<reference key="1">
    <citation type="journal article" date="2009" name="J. Bacteriol.">
        <title>Genome sequences of three Agrobacterium biovars help elucidate the evolution of multichromosome genomes in bacteria.</title>
        <authorList>
            <person name="Slater S.C."/>
            <person name="Goldman B.S."/>
            <person name="Goodner B."/>
            <person name="Setubal J.C."/>
            <person name="Farrand S.K."/>
            <person name="Nester E.W."/>
            <person name="Burr T.J."/>
            <person name="Banta L."/>
            <person name="Dickerman A.W."/>
            <person name="Paulsen I."/>
            <person name="Otten L."/>
            <person name="Suen G."/>
            <person name="Welch R."/>
            <person name="Almeida N.F."/>
            <person name="Arnold F."/>
            <person name="Burton O.T."/>
            <person name="Du Z."/>
            <person name="Ewing A."/>
            <person name="Godsy E."/>
            <person name="Heisel S."/>
            <person name="Houmiel K.L."/>
            <person name="Jhaveri J."/>
            <person name="Lu J."/>
            <person name="Miller N.M."/>
            <person name="Norton S."/>
            <person name="Chen Q."/>
            <person name="Phoolcharoen W."/>
            <person name="Ohlin V."/>
            <person name="Ondrusek D."/>
            <person name="Pride N."/>
            <person name="Stricklin S.L."/>
            <person name="Sun J."/>
            <person name="Wheeler C."/>
            <person name="Wilson L."/>
            <person name="Zhu H."/>
            <person name="Wood D.W."/>
        </authorList>
    </citation>
    <scope>NUCLEOTIDE SEQUENCE [LARGE SCALE GENOMIC DNA]</scope>
    <source>
        <strain>K84 / ATCC BAA-868</strain>
    </source>
</reference>
<feature type="chain" id="PRO_1000123395" description="Pantothenate synthetase">
    <location>
        <begin position="1"/>
        <end position="291"/>
    </location>
</feature>
<feature type="active site" description="Proton donor" evidence="1">
    <location>
        <position position="37"/>
    </location>
</feature>
<feature type="binding site" evidence="1">
    <location>
        <begin position="30"/>
        <end position="37"/>
    </location>
    <ligand>
        <name>ATP</name>
        <dbReference type="ChEBI" id="CHEBI:30616"/>
    </ligand>
</feature>
<feature type="binding site" evidence="1">
    <location>
        <position position="61"/>
    </location>
    <ligand>
        <name>(R)-pantoate</name>
        <dbReference type="ChEBI" id="CHEBI:15980"/>
    </ligand>
</feature>
<feature type="binding site" evidence="1">
    <location>
        <position position="61"/>
    </location>
    <ligand>
        <name>beta-alanine</name>
        <dbReference type="ChEBI" id="CHEBI:57966"/>
    </ligand>
</feature>
<feature type="binding site" evidence="1">
    <location>
        <begin position="147"/>
        <end position="150"/>
    </location>
    <ligand>
        <name>ATP</name>
        <dbReference type="ChEBI" id="CHEBI:30616"/>
    </ligand>
</feature>
<feature type="binding site" evidence="1">
    <location>
        <position position="153"/>
    </location>
    <ligand>
        <name>(R)-pantoate</name>
        <dbReference type="ChEBI" id="CHEBI:15980"/>
    </ligand>
</feature>
<feature type="binding site" evidence="1">
    <location>
        <position position="176"/>
    </location>
    <ligand>
        <name>ATP</name>
        <dbReference type="ChEBI" id="CHEBI:30616"/>
    </ligand>
</feature>
<feature type="binding site" evidence="1">
    <location>
        <begin position="184"/>
        <end position="187"/>
    </location>
    <ligand>
        <name>ATP</name>
        <dbReference type="ChEBI" id="CHEBI:30616"/>
    </ligand>
</feature>
<protein>
    <recommendedName>
        <fullName evidence="1">Pantothenate synthetase</fullName>
        <shortName evidence="1">PS</shortName>
        <ecNumber evidence="1">6.3.2.1</ecNumber>
    </recommendedName>
    <alternativeName>
        <fullName evidence="1">Pantoate--beta-alanine ligase</fullName>
    </alternativeName>
    <alternativeName>
        <fullName evidence="1">Pantoate-activating enzyme</fullName>
    </alternativeName>
</protein>
<comment type="function">
    <text evidence="1">Catalyzes the condensation of pantoate with beta-alanine in an ATP-dependent reaction via a pantoyl-adenylate intermediate.</text>
</comment>
<comment type="catalytic activity">
    <reaction evidence="1">
        <text>(R)-pantoate + beta-alanine + ATP = (R)-pantothenate + AMP + diphosphate + H(+)</text>
        <dbReference type="Rhea" id="RHEA:10912"/>
        <dbReference type="ChEBI" id="CHEBI:15378"/>
        <dbReference type="ChEBI" id="CHEBI:15980"/>
        <dbReference type="ChEBI" id="CHEBI:29032"/>
        <dbReference type="ChEBI" id="CHEBI:30616"/>
        <dbReference type="ChEBI" id="CHEBI:33019"/>
        <dbReference type="ChEBI" id="CHEBI:57966"/>
        <dbReference type="ChEBI" id="CHEBI:456215"/>
        <dbReference type="EC" id="6.3.2.1"/>
    </reaction>
</comment>
<comment type="pathway">
    <text evidence="1">Cofactor biosynthesis; (R)-pantothenate biosynthesis; (R)-pantothenate from (R)-pantoate and beta-alanine: step 1/1.</text>
</comment>
<comment type="subunit">
    <text evidence="1">Homodimer.</text>
</comment>
<comment type="subcellular location">
    <subcellularLocation>
        <location evidence="1">Cytoplasm</location>
    </subcellularLocation>
</comment>
<comment type="miscellaneous">
    <text evidence="1">The reaction proceeds by a bi uni uni bi ping pong mechanism.</text>
</comment>
<comment type="similarity">
    <text evidence="1">Belongs to the pantothenate synthetase family.</text>
</comment>
<evidence type="ECO:0000255" key="1">
    <source>
        <dbReference type="HAMAP-Rule" id="MF_00158"/>
    </source>
</evidence>